<organism>
    <name type="scientific">Bacillus anthracis</name>
    <dbReference type="NCBI Taxonomy" id="1392"/>
    <lineage>
        <taxon>Bacteria</taxon>
        <taxon>Bacillati</taxon>
        <taxon>Bacillota</taxon>
        <taxon>Bacilli</taxon>
        <taxon>Bacillales</taxon>
        <taxon>Bacillaceae</taxon>
        <taxon>Bacillus</taxon>
        <taxon>Bacillus cereus group</taxon>
    </lineage>
</organism>
<reference key="1">
    <citation type="journal article" date="2003" name="Nature">
        <title>The genome sequence of Bacillus anthracis Ames and comparison to closely related bacteria.</title>
        <authorList>
            <person name="Read T.D."/>
            <person name="Peterson S.N."/>
            <person name="Tourasse N.J."/>
            <person name="Baillie L.W."/>
            <person name="Paulsen I.T."/>
            <person name="Nelson K.E."/>
            <person name="Tettelin H."/>
            <person name="Fouts D.E."/>
            <person name="Eisen J.A."/>
            <person name="Gill S.R."/>
            <person name="Holtzapple E.K."/>
            <person name="Okstad O.A."/>
            <person name="Helgason E."/>
            <person name="Rilstone J."/>
            <person name="Wu M."/>
            <person name="Kolonay J.F."/>
            <person name="Beanan M.J."/>
            <person name="Dodson R.J."/>
            <person name="Brinkac L.M."/>
            <person name="Gwinn M.L."/>
            <person name="DeBoy R.T."/>
            <person name="Madpu R."/>
            <person name="Daugherty S.C."/>
            <person name="Durkin A.S."/>
            <person name="Haft D.H."/>
            <person name="Nelson W.C."/>
            <person name="Peterson J.D."/>
            <person name="Pop M."/>
            <person name="Khouri H.M."/>
            <person name="Radune D."/>
            <person name="Benton J.L."/>
            <person name="Mahamoud Y."/>
            <person name="Jiang L."/>
            <person name="Hance I.R."/>
            <person name="Weidman J.F."/>
            <person name="Berry K.J."/>
            <person name="Plaut R.D."/>
            <person name="Wolf A.M."/>
            <person name="Watkins K.L."/>
            <person name="Nierman W.C."/>
            <person name="Hazen A."/>
            <person name="Cline R.T."/>
            <person name="Redmond C."/>
            <person name="Thwaite J.E."/>
            <person name="White O."/>
            <person name="Salzberg S.L."/>
            <person name="Thomason B."/>
            <person name="Friedlander A.M."/>
            <person name="Koehler T.M."/>
            <person name="Hanna P.C."/>
            <person name="Kolstoe A.-B."/>
            <person name="Fraser C.M."/>
        </authorList>
    </citation>
    <scope>NUCLEOTIDE SEQUENCE [LARGE SCALE GENOMIC DNA]</scope>
    <source>
        <strain>Ames / isolate Porton</strain>
    </source>
</reference>
<reference key="2">
    <citation type="journal article" date="2009" name="J. Bacteriol.">
        <title>The complete genome sequence of Bacillus anthracis Ames 'Ancestor'.</title>
        <authorList>
            <person name="Ravel J."/>
            <person name="Jiang L."/>
            <person name="Stanley S.T."/>
            <person name="Wilson M.R."/>
            <person name="Decker R.S."/>
            <person name="Read T.D."/>
            <person name="Worsham P."/>
            <person name="Keim P.S."/>
            <person name="Salzberg S.L."/>
            <person name="Fraser-Liggett C.M."/>
            <person name="Rasko D.A."/>
        </authorList>
    </citation>
    <scope>NUCLEOTIDE SEQUENCE [LARGE SCALE GENOMIC DNA]</scope>
    <source>
        <strain>Ames ancestor</strain>
    </source>
</reference>
<reference key="3">
    <citation type="submission" date="2004-01" db="EMBL/GenBank/DDBJ databases">
        <title>Complete genome sequence of Bacillus anthracis Sterne.</title>
        <authorList>
            <person name="Brettin T.S."/>
            <person name="Bruce D."/>
            <person name="Challacombe J.F."/>
            <person name="Gilna P."/>
            <person name="Han C."/>
            <person name="Hill K."/>
            <person name="Hitchcock P."/>
            <person name="Jackson P."/>
            <person name="Keim P."/>
            <person name="Longmire J."/>
            <person name="Lucas S."/>
            <person name="Okinaka R."/>
            <person name="Richardson P."/>
            <person name="Rubin E."/>
            <person name="Tice H."/>
        </authorList>
    </citation>
    <scope>NUCLEOTIDE SEQUENCE [LARGE SCALE GENOMIC DNA]</scope>
    <source>
        <strain>Sterne</strain>
    </source>
</reference>
<accession>Q81JT7</accession>
<accession>Q6HQD6</accession>
<accession>Q6KJR4</accession>
<sequence length="556" mass="62490">MNSLEQVKGLIKEEIQAAVLKAELATEEQIPNVVLESPKDKTNGDFSTNMAMQLARVAKKAPRMIAEELVANFDKAKASTEKIEIAGPGFINFYMDNSYLTDLIPTIVNAGEAYGETNTGKGEKVQVEFVSANPTGDLHLGHARGAAVGDTLCNLLAKAGYDVSREYYINDAGNQIHNLALSVEARYMQALGLEKEMPEDGYHGADIIGIGKRLAEEFGDRYAKADEKESYEFYREYGLKYELAKLQKDLESFRVKFDVWFSETSLYKNGKIDQALAVLKERDEIFEEDGATWFRSMTYGDDKNRVLIKNDGSYTYLTPDIAYHRDKLERGFDKLINIWGADHHGYIPRMKAAIQALGYDKETLEVEIIQMVQLYQNGEKMKMSKRTGKAVTLRELMEEVGVDAMRYFFAMRSGDSHLDFDMDLAVSKSNENPVYYAQYAHARVCSILRQGEELGLATGGDVNYKLVTSEKEVELLKKLGEFPAVVADAAQKRLPHRITNYAFELAATLHSFYNAEKVLNQDNLELSKARYELMKAVRTTLQNALAIVGVSAPEKM</sequence>
<feature type="chain" id="PRO_0000151525" description="Arginine--tRNA ligase 1">
    <location>
        <begin position="1"/>
        <end position="556"/>
    </location>
</feature>
<feature type="short sequence motif" description="'HIGH' region">
    <location>
        <begin position="132"/>
        <end position="142"/>
    </location>
</feature>
<name>SYR1_BACAN</name>
<protein>
    <recommendedName>
        <fullName evidence="1">Arginine--tRNA ligase 1</fullName>
        <ecNumber evidence="1">6.1.1.19</ecNumber>
    </recommendedName>
    <alternativeName>
        <fullName evidence="1">Arginyl-tRNA synthetase 1</fullName>
        <shortName evidence="1">ArgRS 1</shortName>
    </alternativeName>
</protein>
<keyword id="KW-0030">Aminoacyl-tRNA synthetase</keyword>
<keyword id="KW-0067">ATP-binding</keyword>
<keyword id="KW-0963">Cytoplasm</keyword>
<keyword id="KW-0436">Ligase</keyword>
<keyword id="KW-0547">Nucleotide-binding</keyword>
<keyword id="KW-0648">Protein biosynthesis</keyword>
<keyword id="KW-1185">Reference proteome</keyword>
<dbReference type="EC" id="6.1.1.19" evidence="1"/>
<dbReference type="EMBL" id="AE016879">
    <property type="protein sequence ID" value="AAP29249.1"/>
    <property type="molecule type" value="Genomic_DNA"/>
</dbReference>
<dbReference type="EMBL" id="AE017334">
    <property type="protein sequence ID" value="AAT34757.1"/>
    <property type="molecule type" value="Genomic_DNA"/>
</dbReference>
<dbReference type="EMBL" id="AE017225">
    <property type="protein sequence ID" value="AAT57502.1"/>
    <property type="molecule type" value="Genomic_DNA"/>
</dbReference>
<dbReference type="RefSeq" id="NP_847763.1">
    <property type="nucleotide sequence ID" value="NC_003997.3"/>
</dbReference>
<dbReference type="RefSeq" id="YP_031452.1">
    <property type="nucleotide sequence ID" value="NC_005945.1"/>
</dbReference>
<dbReference type="SMR" id="Q81JT7"/>
<dbReference type="IntAct" id="Q81JT7">
    <property type="interactions" value="7"/>
</dbReference>
<dbReference type="STRING" id="261594.GBAA_5611"/>
<dbReference type="DNASU" id="1085315"/>
<dbReference type="GeneID" id="45025192"/>
<dbReference type="KEGG" id="ban:BA_5611"/>
<dbReference type="KEGG" id="banh:HYU01_27390"/>
<dbReference type="KEGG" id="bar:GBAA_5611"/>
<dbReference type="KEGG" id="bat:BAS5213"/>
<dbReference type="PATRIC" id="fig|198094.11.peg.5569"/>
<dbReference type="eggNOG" id="COG0018">
    <property type="taxonomic scope" value="Bacteria"/>
</dbReference>
<dbReference type="HOGENOM" id="CLU_006406_0_1_9"/>
<dbReference type="OMA" id="YEFKWER"/>
<dbReference type="OrthoDB" id="9805987at2"/>
<dbReference type="Proteomes" id="UP000000427">
    <property type="component" value="Chromosome"/>
</dbReference>
<dbReference type="Proteomes" id="UP000000594">
    <property type="component" value="Chromosome"/>
</dbReference>
<dbReference type="GO" id="GO:0005737">
    <property type="term" value="C:cytoplasm"/>
    <property type="evidence" value="ECO:0007669"/>
    <property type="project" value="UniProtKB-SubCell"/>
</dbReference>
<dbReference type="GO" id="GO:0004814">
    <property type="term" value="F:arginine-tRNA ligase activity"/>
    <property type="evidence" value="ECO:0007669"/>
    <property type="project" value="UniProtKB-UniRule"/>
</dbReference>
<dbReference type="GO" id="GO:0005524">
    <property type="term" value="F:ATP binding"/>
    <property type="evidence" value="ECO:0007669"/>
    <property type="project" value="UniProtKB-UniRule"/>
</dbReference>
<dbReference type="GO" id="GO:0006420">
    <property type="term" value="P:arginyl-tRNA aminoacylation"/>
    <property type="evidence" value="ECO:0007669"/>
    <property type="project" value="UniProtKB-UniRule"/>
</dbReference>
<dbReference type="CDD" id="cd07956">
    <property type="entry name" value="Anticodon_Ia_Arg"/>
    <property type="match status" value="1"/>
</dbReference>
<dbReference type="CDD" id="cd00671">
    <property type="entry name" value="ArgRS_core"/>
    <property type="match status" value="1"/>
</dbReference>
<dbReference type="FunFam" id="1.10.730.10:FF:000008">
    <property type="entry name" value="Arginine--tRNA ligase"/>
    <property type="match status" value="1"/>
</dbReference>
<dbReference type="FunFam" id="3.30.1360.70:FF:000003">
    <property type="entry name" value="Arginine--tRNA ligase"/>
    <property type="match status" value="1"/>
</dbReference>
<dbReference type="FunFam" id="3.40.50.620:FF:000062">
    <property type="entry name" value="Arginine--tRNA ligase"/>
    <property type="match status" value="1"/>
</dbReference>
<dbReference type="Gene3D" id="3.30.1360.70">
    <property type="entry name" value="Arginyl tRNA synthetase N-terminal domain"/>
    <property type="match status" value="1"/>
</dbReference>
<dbReference type="Gene3D" id="3.40.50.620">
    <property type="entry name" value="HUPs"/>
    <property type="match status" value="1"/>
</dbReference>
<dbReference type="Gene3D" id="1.10.730.10">
    <property type="entry name" value="Isoleucyl-tRNA Synthetase, Domain 1"/>
    <property type="match status" value="1"/>
</dbReference>
<dbReference type="HAMAP" id="MF_00123">
    <property type="entry name" value="Arg_tRNA_synth"/>
    <property type="match status" value="1"/>
</dbReference>
<dbReference type="InterPro" id="IPR001412">
    <property type="entry name" value="aa-tRNA-synth_I_CS"/>
</dbReference>
<dbReference type="InterPro" id="IPR001278">
    <property type="entry name" value="Arg-tRNA-ligase"/>
</dbReference>
<dbReference type="InterPro" id="IPR005148">
    <property type="entry name" value="Arg-tRNA-synth_N"/>
</dbReference>
<dbReference type="InterPro" id="IPR036695">
    <property type="entry name" value="Arg-tRNA-synth_N_sf"/>
</dbReference>
<dbReference type="InterPro" id="IPR035684">
    <property type="entry name" value="ArgRS_core"/>
</dbReference>
<dbReference type="InterPro" id="IPR008909">
    <property type="entry name" value="DALR_anticod-bd"/>
</dbReference>
<dbReference type="InterPro" id="IPR014729">
    <property type="entry name" value="Rossmann-like_a/b/a_fold"/>
</dbReference>
<dbReference type="InterPro" id="IPR009080">
    <property type="entry name" value="tRNAsynth_Ia_anticodon-bd"/>
</dbReference>
<dbReference type="NCBIfam" id="TIGR00456">
    <property type="entry name" value="argS"/>
    <property type="match status" value="1"/>
</dbReference>
<dbReference type="PANTHER" id="PTHR11956:SF5">
    <property type="entry name" value="ARGININE--TRNA LIGASE, CYTOPLASMIC"/>
    <property type="match status" value="1"/>
</dbReference>
<dbReference type="PANTHER" id="PTHR11956">
    <property type="entry name" value="ARGINYL-TRNA SYNTHETASE"/>
    <property type="match status" value="1"/>
</dbReference>
<dbReference type="Pfam" id="PF03485">
    <property type="entry name" value="Arg_tRNA_synt_N"/>
    <property type="match status" value="1"/>
</dbReference>
<dbReference type="Pfam" id="PF05746">
    <property type="entry name" value="DALR_1"/>
    <property type="match status" value="1"/>
</dbReference>
<dbReference type="Pfam" id="PF00750">
    <property type="entry name" value="tRNA-synt_1d"/>
    <property type="match status" value="1"/>
</dbReference>
<dbReference type="PRINTS" id="PR01038">
    <property type="entry name" value="TRNASYNTHARG"/>
</dbReference>
<dbReference type="SMART" id="SM01016">
    <property type="entry name" value="Arg_tRNA_synt_N"/>
    <property type="match status" value="1"/>
</dbReference>
<dbReference type="SMART" id="SM00836">
    <property type="entry name" value="DALR_1"/>
    <property type="match status" value="1"/>
</dbReference>
<dbReference type="SUPFAM" id="SSF47323">
    <property type="entry name" value="Anticodon-binding domain of a subclass of class I aminoacyl-tRNA synthetases"/>
    <property type="match status" value="1"/>
</dbReference>
<dbReference type="SUPFAM" id="SSF55190">
    <property type="entry name" value="Arginyl-tRNA synthetase (ArgRS), N-terminal 'additional' domain"/>
    <property type="match status" value="1"/>
</dbReference>
<dbReference type="SUPFAM" id="SSF52374">
    <property type="entry name" value="Nucleotidylyl transferase"/>
    <property type="match status" value="1"/>
</dbReference>
<dbReference type="PROSITE" id="PS00178">
    <property type="entry name" value="AA_TRNA_LIGASE_I"/>
    <property type="match status" value="1"/>
</dbReference>
<comment type="catalytic activity">
    <reaction evidence="1">
        <text>tRNA(Arg) + L-arginine + ATP = L-arginyl-tRNA(Arg) + AMP + diphosphate</text>
        <dbReference type="Rhea" id="RHEA:20301"/>
        <dbReference type="Rhea" id="RHEA-COMP:9658"/>
        <dbReference type="Rhea" id="RHEA-COMP:9673"/>
        <dbReference type="ChEBI" id="CHEBI:30616"/>
        <dbReference type="ChEBI" id="CHEBI:32682"/>
        <dbReference type="ChEBI" id="CHEBI:33019"/>
        <dbReference type="ChEBI" id="CHEBI:78442"/>
        <dbReference type="ChEBI" id="CHEBI:78513"/>
        <dbReference type="ChEBI" id="CHEBI:456215"/>
        <dbReference type="EC" id="6.1.1.19"/>
    </reaction>
</comment>
<comment type="subunit">
    <text evidence="1">Monomer.</text>
</comment>
<comment type="subcellular location">
    <subcellularLocation>
        <location evidence="1">Cytoplasm</location>
    </subcellularLocation>
</comment>
<comment type="similarity">
    <text evidence="1">Belongs to the class-I aminoacyl-tRNA synthetase family.</text>
</comment>
<proteinExistence type="inferred from homology"/>
<gene>
    <name evidence="1" type="primary">argS1</name>
    <name type="ordered locus">BA_5611</name>
    <name type="ordered locus">GBAA_5611</name>
    <name type="ordered locus">BAS5213</name>
</gene>
<evidence type="ECO:0000255" key="1">
    <source>
        <dbReference type="HAMAP-Rule" id="MF_00123"/>
    </source>
</evidence>